<evidence type="ECO:0000250" key="1">
    <source>
        <dbReference type="UniProtKB" id="O34450"/>
    </source>
</evidence>
<evidence type="ECO:0000250" key="2">
    <source>
        <dbReference type="UniProtKB" id="P0AF18"/>
    </source>
</evidence>
<evidence type="ECO:0000269" key="3">
    <source>
    </source>
</evidence>
<evidence type="ECO:0000303" key="4">
    <source>
    </source>
</evidence>
<evidence type="ECO:0000305" key="5"/>
<evidence type="ECO:0000305" key="6">
    <source>
    </source>
</evidence>
<feature type="chain" id="PRO_0000170913" description="N-acetylglucosamine-6-phosphate deacetylase">
    <location>
        <begin position="1"/>
        <end position="387"/>
    </location>
</feature>
<feature type="active site" description="Proton donor/acceptor" evidence="1">
    <location>
        <position position="277"/>
    </location>
</feature>
<feature type="binding site" evidence="1">
    <location>
        <position position="62"/>
    </location>
    <ligand>
        <name>a divalent metal cation</name>
        <dbReference type="ChEBI" id="CHEBI:60240"/>
        <label>1</label>
    </ligand>
</feature>
<feature type="binding site" evidence="1">
    <location>
        <position position="64"/>
    </location>
    <ligand>
        <name>a divalent metal cation</name>
        <dbReference type="ChEBI" id="CHEBI:60240"/>
        <label>1</label>
    </ligand>
</feature>
<feature type="binding site" evidence="1">
    <location>
        <position position="132"/>
    </location>
    <ligand>
        <name>a divalent metal cation</name>
        <dbReference type="ChEBI" id="CHEBI:60240"/>
        <label>1</label>
    </ligand>
</feature>
<feature type="binding site" evidence="1">
    <location>
        <position position="132"/>
    </location>
    <ligand>
        <name>a divalent metal cation</name>
        <dbReference type="ChEBI" id="CHEBI:60240"/>
        <label>2</label>
    </ligand>
</feature>
<feature type="binding site" evidence="1">
    <location>
        <begin position="143"/>
        <end position="144"/>
    </location>
    <ligand>
        <name>substrate</name>
    </ligand>
</feature>
<feature type="binding site" evidence="1">
    <location>
        <position position="198"/>
    </location>
    <ligand>
        <name>a divalent metal cation</name>
        <dbReference type="ChEBI" id="CHEBI:60240"/>
        <label>2</label>
    </ligand>
</feature>
<feature type="binding site" evidence="1">
    <location>
        <position position="219"/>
    </location>
    <ligand>
        <name>a divalent metal cation</name>
        <dbReference type="ChEBI" id="CHEBI:60240"/>
        <label>2</label>
    </ligand>
</feature>
<feature type="binding site" evidence="1">
    <location>
        <begin position="222"/>
        <end position="223"/>
    </location>
    <ligand>
        <name>substrate</name>
    </ligand>
</feature>
<feature type="binding site" evidence="2">
    <location>
        <position position="230"/>
    </location>
    <ligand>
        <name>substrate</name>
    </ligand>
</feature>
<feature type="binding site" evidence="1">
    <location>
        <begin position="251"/>
        <end position="254"/>
    </location>
    <ligand>
        <name>substrate</name>
    </ligand>
</feature>
<feature type="binding site" evidence="1">
    <location>
        <position position="277"/>
    </location>
    <ligand>
        <name>a divalent metal cation</name>
        <dbReference type="ChEBI" id="CHEBI:60240"/>
        <label>1</label>
    </ligand>
</feature>
<feature type="binding site" evidence="1">
    <location>
        <begin position="310"/>
        <end position="312"/>
    </location>
    <ligand>
        <name>substrate</name>
    </ligand>
</feature>
<reference key="1">
    <citation type="journal article" date="2003" name="Microbiology">
        <title>Phosphoenolpyruvate phosphotransferase system and N-acetylglucosamine metabolism in Bacillus sphaericus.</title>
        <authorList>
            <person name="Alice A.F."/>
            <person name="Perez-Martinez G."/>
            <person name="Sanchez-Rivas C."/>
        </authorList>
    </citation>
    <scope>NUCLEOTIDE SEQUENCE [GENOMIC DNA]</scope>
    <scope>FUNCTION</scope>
    <scope>INDUCTION</scope>
    <source>
        <strain>2362</strain>
    </source>
</reference>
<dbReference type="EC" id="3.5.1.25" evidence="2"/>
<dbReference type="EMBL" id="AY211495">
    <property type="protein sequence ID" value="AAO43396.1"/>
    <property type="molecule type" value="Genomic_DNA"/>
</dbReference>
<dbReference type="SMR" id="Q84F86"/>
<dbReference type="STRING" id="1421.A2J09_04990"/>
<dbReference type="UniPathway" id="UPA00629">
    <property type="reaction ID" value="UER00683"/>
</dbReference>
<dbReference type="GO" id="GO:0005506">
    <property type="term" value="F:iron ion binding"/>
    <property type="evidence" value="ECO:0000250"/>
    <property type="project" value="UniProtKB"/>
</dbReference>
<dbReference type="GO" id="GO:0008448">
    <property type="term" value="F:N-acetylglucosamine-6-phosphate deacetylase activity"/>
    <property type="evidence" value="ECO:0000250"/>
    <property type="project" value="UniProtKB"/>
</dbReference>
<dbReference type="GO" id="GO:0042803">
    <property type="term" value="F:protein homodimerization activity"/>
    <property type="evidence" value="ECO:0000250"/>
    <property type="project" value="UniProtKB"/>
</dbReference>
<dbReference type="GO" id="GO:0006046">
    <property type="term" value="P:N-acetylglucosamine catabolic process"/>
    <property type="evidence" value="ECO:0000250"/>
    <property type="project" value="UniProtKB"/>
</dbReference>
<dbReference type="GO" id="GO:0019262">
    <property type="term" value="P:N-acetylneuraminate catabolic process"/>
    <property type="evidence" value="ECO:0007669"/>
    <property type="project" value="UniProtKB-UniPathway"/>
</dbReference>
<dbReference type="CDD" id="cd00854">
    <property type="entry name" value="NagA"/>
    <property type="match status" value="1"/>
</dbReference>
<dbReference type="FunFam" id="3.20.20.140:FF:000004">
    <property type="entry name" value="N-acetylglucosamine-6-phosphate deacetylase"/>
    <property type="match status" value="1"/>
</dbReference>
<dbReference type="Gene3D" id="3.20.20.140">
    <property type="entry name" value="Metal-dependent hydrolases"/>
    <property type="match status" value="1"/>
</dbReference>
<dbReference type="Gene3D" id="2.30.40.10">
    <property type="entry name" value="Urease, subunit C, domain 1"/>
    <property type="match status" value="1"/>
</dbReference>
<dbReference type="InterPro" id="IPR006680">
    <property type="entry name" value="Amidohydro-rel"/>
</dbReference>
<dbReference type="InterPro" id="IPR003764">
    <property type="entry name" value="GlcNAc_6-P_deAcase"/>
</dbReference>
<dbReference type="InterPro" id="IPR011059">
    <property type="entry name" value="Metal-dep_hydrolase_composite"/>
</dbReference>
<dbReference type="InterPro" id="IPR032466">
    <property type="entry name" value="Metal_Hydrolase"/>
</dbReference>
<dbReference type="NCBIfam" id="TIGR00221">
    <property type="entry name" value="nagA"/>
    <property type="match status" value="1"/>
</dbReference>
<dbReference type="PANTHER" id="PTHR11113">
    <property type="entry name" value="N-ACETYLGLUCOSAMINE-6-PHOSPHATE DEACETYLASE"/>
    <property type="match status" value="1"/>
</dbReference>
<dbReference type="PANTHER" id="PTHR11113:SF14">
    <property type="entry name" value="N-ACETYLGLUCOSAMINE-6-PHOSPHATE DEACETYLASE"/>
    <property type="match status" value="1"/>
</dbReference>
<dbReference type="Pfam" id="PF01979">
    <property type="entry name" value="Amidohydro_1"/>
    <property type="match status" value="1"/>
</dbReference>
<dbReference type="PIRSF" id="PIRSF038994">
    <property type="entry name" value="NagA"/>
    <property type="match status" value="1"/>
</dbReference>
<dbReference type="SUPFAM" id="SSF51338">
    <property type="entry name" value="Composite domain of metallo-dependent hydrolases"/>
    <property type="match status" value="1"/>
</dbReference>
<dbReference type="SUPFAM" id="SSF51556">
    <property type="entry name" value="Metallo-dependent hydrolases"/>
    <property type="match status" value="1"/>
</dbReference>
<gene>
    <name type="primary">nagA</name>
</gene>
<sequence>MFFLSLIIRNITVVNASGRDEQMDVWMKDGKIAQIAQHIHAQGVDQLEGSGKFLLPGFIDMHIHGSAQMDTMDASDEGLHIHGPITIKEGTTSFLATTMTQSFDWFDRAQRQCGNNFSPKSDEAEVLGLHIEGPFVSKQRAGAQPLDYIVQPDMEVIKKWQALSGQKIKQITLAPEEPNGMAAVQSLSESGVIVSIGHSDATFEQMQEAVQLGASQGTHLYNQMRPFHHRDPGVVGGVLLVDAIKAELIVDFIHMHEGAVEMAYRLKGADGIILITDAMRAKGMPYGEYDLGGQLVHVTESGAHLSNGSLAGSILTMDQAVRNMRQITNCTLEELVKMSSYNAAQQLKLTNKGQLTEGYDADAVIVDEHLLLHQTIKAGRIRVQTNN</sequence>
<protein>
    <recommendedName>
        <fullName evidence="4">N-acetylglucosamine-6-phosphate deacetylase</fullName>
        <shortName evidence="1">GlcNAc 6-P deacetylase</shortName>
        <ecNumber evidence="2">3.5.1.25</ecNumber>
    </recommendedName>
</protein>
<accession>Q84F86</accession>
<comment type="function">
    <text evidence="3">Involved in the first committed step in the biosynthesis of amino-sugar-nucleotides. Catalyzes the hydrolysis of the N-acetyl group of N-acetylglucosamine-6-phosphate (GlcNAc-6-P) to yield glucosamine 6-phosphate and acetate.</text>
</comment>
<comment type="catalytic activity">
    <reaction evidence="2">
        <text>N-acetyl-D-glucosamine 6-phosphate + H2O = D-glucosamine 6-phosphate + acetate</text>
        <dbReference type="Rhea" id="RHEA:22936"/>
        <dbReference type="ChEBI" id="CHEBI:15377"/>
        <dbReference type="ChEBI" id="CHEBI:30089"/>
        <dbReference type="ChEBI" id="CHEBI:57513"/>
        <dbReference type="ChEBI" id="CHEBI:58725"/>
        <dbReference type="EC" id="3.5.1.25"/>
    </reaction>
</comment>
<comment type="cofactor">
    <cofactor evidence="1">
        <name>a divalent metal cation</name>
        <dbReference type="ChEBI" id="CHEBI:60240"/>
    </cofactor>
    <text evidence="1">Binds 2 divalent metal cations per subunit.</text>
</comment>
<comment type="pathway">
    <text evidence="6">Amino-sugar metabolism; N-acetylneuraminate degradation; D-fructose 6-phosphate from N-acetylneuraminate: step 4/5.</text>
</comment>
<comment type="subunit">
    <text evidence="1">Homodimer.</text>
</comment>
<comment type="induction">
    <text evidence="3">By N-acetylglucosamine.</text>
</comment>
<comment type="similarity">
    <text evidence="5">Belongs to the metallo-dependent hydrolases superfamily. NagA family.</text>
</comment>
<organism>
    <name type="scientific">Lysinibacillus sphaericus</name>
    <name type="common">Bacillus sphaericus</name>
    <dbReference type="NCBI Taxonomy" id="1421"/>
    <lineage>
        <taxon>Bacteria</taxon>
        <taxon>Bacillati</taxon>
        <taxon>Bacillota</taxon>
        <taxon>Bacilli</taxon>
        <taxon>Bacillales</taxon>
        <taxon>Bacillaceae</taxon>
        <taxon>Lysinibacillus</taxon>
    </lineage>
</organism>
<keyword id="KW-0119">Carbohydrate metabolism</keyword>
<keyword id="KW-0378">Hydrolase</keyword>
<keyword id="KW-0479">Metal-binding</keyword>
<proteinExistence type="evidence at transcript level"/>
<name>NAGA_LYSSH</name>